<protein>
    <recommendedName>
        <fullName evidence="1">UDP-N-acetylglucosamine 1-carboxyvinyltransferase</fullName>
        <ecNumber evidence="1">2.5.1.7</ecNumber>
    </recommendedName>
    <alternativeName>
        <fullName evidence="1">Enoylpyruvate transferase</fullName>
    </alternativeName>
    <alternativeName>
        <fullName evidence="1">UDP-N-acetylglucosamine enolpyruvyl transferase</fullName>
        <shortName evidence="1">EPT</shortName>
    </alternativeName>
</protein>
<gene>
    <name evidence="1" type="primary">murA</name>
    <name type="ordered locus">Mlg_2217</name>
</gene>
<proteinExistence type="inferred from homology"/>
<evidence type="ECO:0000255" key="1">
    <source>
        <dbReference type="HAMAP-Rule" id="MF_00111"/>
    </source>
</evidence>
<organism>
    <name type="scientific">Alkalilimnicola ehrlichii (strain ATCC BAA-1101 / DSM 17681 / MLHE-1)</name>
    <dbReference type="NCBI Taxonomy" id="187272"/>
    <lineage>
        <taxon>Bacteria</taxon>
        <taxon>Pseudomonadati</taxon>
        <taxon>Pseudomonadota</taxon>
        <taxon>Gammaproteobacteria</taxon>
        <taxon>Chromatiales</taxon>
        <taxon>Ectothiorhodospiraceae</taxon>
        <taxon>Alkalilimnicola</taxon>
    </lineage>
</organism>
<dbReference type="EC" id="2.5.1.7" evidence="1"/>
<dbReference type="EMBL" id="CP000453">
    <property type="protein sequence ID" value="ABI57559.1"/>
    <property type="molecule type" value="Genomic_DNA"/>
</dbReference>
<dbReference type="RefSeq" id="WP_011629953.1">
    <property type="nucleotide sequence ID" value="NC_008340.1"/>
</dbReference>
<dbReference type="SMR" id="Q0A6H8"/>
<dbReference type="KEGG" id="aeh:Mlg_2217"/>
<dbReference type="eggNOG" id="COG0766">
    <property type="taxonomic scope" value="Bacteria"/>
</dbReference>
<dbReference type="HOGENOM" id="CLU_027387_0_0_6"/>
<dbReference type="OrthoDB" id="9803760at2"/>
<dbReference type="UniPathway" id="UPA00219"/>
<dbReference type="Proteomes" id="UP000001962">
    <property type="component" value="Chromosome"/>
</dbReference>
<dbReference type="GO" id="GO:0005737">
    <property type="term" value="C:cytoplasm"/>
    <property type="evidence" value="ECO:0007669"/>
    <property type="project" value="UniProtKB-SubCell"/>
</dbReference>
<dbReference type="GO" id="GO:0008760">
    <property type="term" value="F:UDP-N-acetylglucosamine 1-carboxyvinyltransferase activity"/>
    <property type="evidence" value="ECO:0007669"/>
    <property type="project" value="UniProtKB-UniRule"/>
</dbReference>
<dbReference type="GO" id="GO:0051301">
    <property type="term" value="P:cell division"/>
    <property type="evidence" value="ECO:0007669"/>
    <property type="project" value="UniProtKB-KW"/>
</dbReference>
<dbReference type="GO" id="GO:0071555">
    <property type="term" value="P:cell wall organization"/>
    <property type="evidence" value="ECO:0007669"/>
    <property type="project" value="UniProtKB-KW"/>
</dbReference>
<dbReference type="GO" id="GO:0009252">
    <property type="term" value="P:peptidoglycan biosynthetic process"/>
    <property type="evidence" value="ECO:0007669"/>
    <property type="project" value="UniProtKB-UniRule"/>
</dbReference>
<dbReference type="GO" id="GO:0008360">
    <property type="term" value="P:regulation of cell shape"/>
    <property type="evidence" value="ECO:0007669"/>
    <property type="project" value="UniProtKB-KW"/>
</dbReference>
<dbReference type="GO" id="GO:0019277">
    <property type="term" value="P:UDP-N-acetylgalactosamine biosynthetic process"/>
    <property type="evidence" value="ECO:0007669"/>
    <property type="project" value="InterPro"/>
</dbReference>
<dbReference type="CDD" id="cd01555">
    <property type="entry name" value="UdpNAET"/>
    <property type="match status" value="1"/>
</dbReference>
<dbReference type="FunFam" id="3.65.10.10:FF:000002">
    <property type="entry name" value="UDP-N-acetylglucosamine 1-carboxyvinyltransferase"/>
    <property type="match status" value="1"/>
</dbReference>
<dbReference type="Gene3D" id="3.65.10.10">
    <property type="entry name" value="Enolpyruvate transferase domain"/>
    <property type="match status" value="2"/>
</dbReference>
<dbReference type="HAMAP" id="MF_00111">
    <property type="entry name" value="MurA"/>
    <property type="match status" value="1"/>
</dbReference>
<dbReference type="InterPro" id="IPR001986">
    <property type="entry name" value="Enolpyruvate_Tfrase_dom"/>
</dbReference>
<dbReference type="InterPro" id="IPR036968">
    <property type="entry name" value="Enolpyruvate_Tfrase_sf"/>
</dbReference>
<dbReference type="InterPro" id="IPR050068">
    <property type="entry name" value="MurA_subfamily"/>
</dbReference>
<dbReference type="InterPro" id="IPR013792">
    <property type="entry name" value="RNA3'P_cycl/enolpyr_Trfase_a/b"/>
</dbReference>
<dbReference type="InterPro" id="IPR005750">
    <property type="entry name" value="UDP_GlcNAc_COvinyl_MurA"/>
</dbReference>
<dbReference type="NCBIfam" id="TIGR01072">
    <property type="entry name" value="murA"/>
    <property type="match status" value="1"/>
</dbReference>
<dbReference type="NCBIfam" id="NF006873">
    <property type="entry name" value="PRK09369.1"/>
    <property type="match status" value="1"/>
</dbReference>
<dbReference type="PANTHER" id="PTHR43783">
    <property type="entry name" value="UDP-N-ACETYLGLUCOSAMINE 1-CARBOXYVINYLTRANSFERASE"/>
    <property type="match status" value="1"/>
</dbReference>
<dbReference type="PANTHER" id="PTHR43783:SF1">
    <property type="entry name" value="UDP-N-ACETYLGLUCOSAMINE 1-CARBOXYVINYLTRANSFERASE"/>
    <property type="match status" value="1"/>
</dbReference>
<dbReference type="Pfam" id="PF00275">
    <property type="entry name" value="EPSP_synthase"/>
    <property type="match status" value="1"/>
</dbReference>
<dbReference type="SUPFAM" id="SSF55205">
    <property type="entry name" value="EPT/RTPC-like"/>
    <property type="match status" value="1"/>
</dbReference>
<name>MURA_ALKEH</name>
<comment type="function">
    <text evidence="1">Cell wall formation. Adds enolpyruvyl to UDP-N-acetylglucosamine.</text>
</comment>
<comment type="catalytic activity">
    <reaction evidence="1">
        <text>phosphoenolpyruvate + UDP-N-acetyl-alpha-D-glucosamine = UDP-N-acetyl-3-O-(1-carboxyvinyl)-alpha-D-glucosamine + phosphate</text>
        <dbReference type="Rhea" id="RHEA:18681"/>
        <dbReference type="ChEBI" id="CHEBI:43474"/>
        <dbReference type="ChEBI" id="CHEBI:57705"/>
        <dbReference type="ChEBI" id="CHEBI:58702"/>
        <dbReference type="ChEBI" id="CHEBI:68483"/>
        <dbReference type="EC" id="2.5.1.7"/>
    </reaction>
</comment>
<comment type="pathway">
    <text evidence="1">Cell wall biogenesis; peptidoglycan biosynthesis.</text>
</comment>
<comment type="subcellular location">
    <subcellularLocation>
        <location evidence="1">Cytoplasm</location>
    </subcellularLocation>
</comment>
<comment type="similarity">
    <text evidence="1">Belongs to the EPSP synthase family. MurA subfamily.</text>
</comment>
<accession>Q0A6H8</accession>
<reference key="1">
    <citation type="submission" date="2006-08" db="EMBL/GenBank/DDBJ databases">
        <title>Complete sequence of Alkalilimnicola ehrilichei MLHE-1.</title>
        <authorList>
            <person name="Copeland A."/>
            <person name="Lucas S."/>
            <person name="Lapidus A."/>
            <person name="Barry K."/>
            <person name="Detter J.C."/>
            <person name="Glavina del Rio T."/>
            <person name="Hammon N."/>
            <person name="Israni S."/>
            <person name="Dalin E."/>
            <person name="Tice H."/>
            <person name="Pitluck S."/>
            <person name="Sims D."/>
            <person name="Brettin T."/>
            <person name="Bruce D."/>
            <person name="Han C."/>
            <person name="Tapia R."/>
            <person name="Gilna P."/>
            <person name="Schmutz J."/>
            <person name="Larimer F."/>
            <person name="Land M."/>
            <person name="Hauser L."/>
            <person name="Kyrpides N."/>
            <person name="Mikhailova N."/>
            <person name="Oremland R.S."/>
            <person name="Hoeft S.E."/>
            <person name="Switzer-Blum J."/>
            <person name="Kulp T."/>
            <person name="King G."/>
            <person name="Tabita R."/>
            <person name="Witte B."/>
            <person name="Santini J.M."/>
            <person name="Basu P."/>
            <person name="Hollibaugh J.T."/>
            <person name="Xie G."/>
            <person name="Stolz J.F."/>
            <person name="Richardson P."/>
        </authorList>
    </citation>
    <scope>NUCLEOTIDE SEQUENCE [LARGE SCALE GENOMIC DNA]</scope>
    <source>
        <strain>ATCC BAA-1101 / DSM 17681 / MLHE-1</strain>
    </source>
</reference>
<sequence length="418" mass="44948">MERLLIRGGRRLEGEIRISGAKNAALPIMAATLLADGPMTVGNIPHLHDITTTMELLGRMGVGLTVDERMRVEADPRSLHSCHAPYELVKTMRASILVLGPLLARYGEAQVSLPGGCAIGSRPVNLHVEGLRAMGAELTVEEGYIKARCDRLRGARIVLELVTVTGTENLMMAAALAEGTTVIENAAREPEVVDLADCLNAMGAKIQGAGTDTLTIEGVERLNGIHYDVLPDRIESGTYLIAAAITGGRIKLKDTAPKLLDAVLVKLEEAGARIETGPDWISLEMEGRPRSVSVRTAPYPGFPTDMQAQFCALDCIAEGTGTITETVFENRFMHCLEMQRMGADIRIEGNTAILRGVPALKGAPVMATDLRASASLVLAGLVARGETRVDRIYHIDRGYECIEEKLAQLGADIRRVPA</sequence>
<feature type="chain" id="PRO_1000023017" description="UDP-N-acetylglucosamine 1-carboxyvinyltransferase">
    <location>
        <begin position="1"/>
        <end position="418"/>
    </location>
</feature>
<feature type="active site" description="Proton donor" evidence="1">
    <location>
        <position position="117"/>
    </location>
</feature>
<feature type="binding site" evidence="1">
    <location>
        <begin position="22"/>
        <end position="23"/>
    </location>
    <ligand>
        <name>phosphoenolpyruvate</name>
        <dbReference type="ChEBI" id="CHEBI:58702"/>
    </ligand>
</feature>
<feature type="binding site" evidence="1">
    <location>
        <position position="93"/>
    </location>
    <ligand>
        <name>UDP-N-acetyl-alpha-D-glucosamine</name>
        <dbReference type="ChEBI" id="CHEBI:57705"/>
    </ligand>
</feature>
<feature type="binding site" evidence="1">
    <location>
        <position position="305"/>
    </location>
    <ligand>
        <name>UDP-N-acetyl-alpha-D-glucosamine</name>
        <dbReference type="ChEBI" id="CHEBI:57705"/>
    </ligand>
</feature>
<feature type="binding site" evidence="1">
    <location>
        <position position="327"/>
    </location>
    <ligand>
        <name>UDP-N-acetyl-alpha-D-glucosamine</name>
        <dbReference type="ChEBI" id="CHEBI:57705"/>
    </ligand>
</feature>
<feature type="modified residue" description="2-(S-cysteinyl)pyruvic acid O-phosphothioketal" evidence="1">
    <location>
        <position position="117"/>
    </location>
</feature>
<keyword id="KW-0131">Cell cycle</keyword>
<keyword id="KW-0132">Cell division</keyword>
<keyword id="KW-0133">Cell shape</keyword>
<keyword id="KW-0961">Cell wall biogenesis/degradation</keyword>
<keyword id="KW-0963">Cytoplasm</keyword>
<keyword id="KW-0573">Peptidoglycan synthesis</keyword>
<keyword id="KW-0670">Pyruvate</keyword>
<keyword id="KW-1185">Reference proteome</keyword>
<keyword id="KW-0808">Transferase</keyword>